<protein>
    <recommendedName>
        <fullName evidence="3 4">Purotoxin-2</fullName>
        <shortName evidence="3 4">PT2</shortName>
    </recommendedName>
    <alternativeName>
        <fullName evidence="5">OMICRON-lycotoxin-Am1b</fullName>
        <shortName evidence="5">OMICRON-LCTX-Am1b</shortName>
    </alternativeName>
</protein>
<feature type="peptide" id="PRO_0000419528" description="Purotoxin-2" evidence="1">
    <location>
        <begin position="1"/>
        <end position="64"/>
    </location>
</feature>
<feature type="region of interest" description="Knottin domain" evidence="5">
    <location>
        <begin position="1"/>
        <end position="44"/>
    </location>
</feature>
<feature type="region of interest" description="Linear cationic cytotoxin domain" evidence="5">
    <location>
        <begin position="45"/>
        <end position="64"/>
    </location>
</feature>
<feature type="modified residue" description="Leucine amide" evidence="1">
    <location>
        <position position="64"/>
    </location>
</feature>
<feature type="disulfide bond" evidence="2 7 8">
    <location>
        <begin position="4"/>
        <end position="19"/>
    </location>
</feature>
<feature type="disulfide bond" evidence="2 7 8">
    <location>
        <begin position="11"/>
        <end position="28"/>
    </location>
</feature>
<feature type="disulfide bond" evidence="2 7 8">
    <location>
        <begin position="18"/>
        <end position="44"/>
    </location>
</feature>
<feature type="disulfide bond" evidence="2 7 8">
    <location>
        <begin position="30"/>
        <end position="42"/>
    </location>
</feature>
<feature type="strand" evidence="10">
    <location>
        <begin position="7"/>
        <end position="9"/>
    </location>
</feature>
<feature type="strand" evidence="10">
    <location>
        <begin position="22"/>
        <end position="24"/>
    </location>
</feature>
<feature type="strand" evidence="9">
    <location>
        <begin position="27"/>
        <end position="31"/>
    </location>
</feature>
<feature type="turn" evidence="9">
    <location>
        <begin position="36"/>
        <end position="38"/>
    </location>
</feature>
<feature type="strand" evidence="9">
    <location>
        <begin position="41"/>
        <end position="45"/>
    </location>
</feature>
<feature type="helix" evidence="10">
    <location>
        <begin position="48"/>
        <end position="63"/>
    </location>
</feature>
<dbReference type="PDB" id="2MZF">
    <property type="method" value="NMR"/>
    <property type="chains" value="A=1-64"/>
</dbReference>
<dbReference type="PDB" id="2MZG">
    <property type="method" value="NMR"/>
    <property type="chains" value="A=1-64"/>
</dbReference>
<dbReference type="PDBsum" id="2MZF"/>
<dbReference type="PDBsum" id="2MZG"/>
<dbReference type="BMRB" id="B3EWH0"/>
<dbReference type="SMR" id="B3EWH0"/>
<dbReference type="GO" id="GO:0005576">
    <property type="term" value="C:extracellular region"/>
    <property type="evidence" value="ECO:0007669"/>
    <property type="project" value="UniProtKB-SubCell"/>
</dbReference>
<dbReference type="GO" id="GO:0019855">
    <property type="term" value="F:calcium channel inhibitor activity"/>
    <property type="evidence" value="ECO:0000314"/>
    <property type="project" value="UniProtKB"/>
</dbReference>
<dbReference type="GO" id="GO:0090729">
    <property type="term" value="F:toxin activity"/>
    <property type="evidence" value="ECO:0007669"/>
    <property type="project" value="UniProtKB-KW"/>
</dbReference>
<dbReference type="InterPro" id="IPR019553">
    <property type="entry name" value="Spider_toxin_CSTX_knottin"/>
</dbReference>
<dbReference type="InterPro" id="IPR011142">
    <property type="entry name" value="Spider_toxin_CSTX_Knottin_CS"/>
</dbReference>
<dbReference type="Pfam" id="PF10530">
    <property type="entry name" value="Toxin_35"/>
    <property type="match status" value="1"/>
</dbReference>
<dbReference type="PROSITE" id="PS60029">
    <property type="entry name" value="SPIDER_CSTX"/>
    <property type="match status" value="1"/>
</dbReference>
<accession>B3EWH0</accession>
<organism>
    <name type="scientific">Alopecosa marikovskyi</name>
    <name type="common">Wolf spider</name>
    <name type="synonym">Lycosa kazakhstanicus</name>
    <dbReference type="NCBI Taxonomy" id="2066572"/>
    <lineage>
        <taxon>Eukaryota</taxon>
        <taxon>Metazoa</taxon>
        <taxon>Ecdysozoa</taxon>
        <taxon>Arthropoda</taxon>
        <taxon>Chelicerata</taxon>
        <taxon>Arachnida</taxon>
        <taxon>Araneae</taxon>
        <taxon>Araneomorphae</taxon>
        <taxon>Entelegynae</taxon>
        <taxon>Lycosoidea</taxon>
        <taxon>Lycosidae</taxon>
        <taxon>Alopecosa</taxon>
    </lineage>
</organism>
<name>TXPR2_ALOMR</name>
<keyword id="KW-0002">3D-structure</keyword>
<keyword id="KW-0027">Amidation</keyword>
<keyword id="KW-0108">Calcium channel impairing toxin</keyword>
<keyword id="KW-0903">Direct protein sequencing</keyword>
<keyword id="KW-1015">Disulfide bond</keyword>
<keyword id="KW-0872">Ion channel impairing toxin</keyword>
<keyword id="KW-0960">Knottin</keyword>
<keyword id="KW-0528">Neurotoxin</keyword>
<keyword id="KW-0964">Secreted</keyword>
<keyword id="KW-0800">Toxin</keyword>
<sequence>AKACTPLLHDCSHDRHSCCRGDMFKYVCDCFYPEGEDKTEVCSCQQPKSHKIAEKIIDKAKTTL</sequence>
<comment type="function">
    <text evidence="1">Enhances the high-affinity desensitization of human P2RX3 purinoceptors (PubMed:22842000). At 50 nM, the toxin decreases the IC(50) for ambient ATP from 2.67 nM to 0.77 nM in human P2RX3 (PubMed:22842000).</text>
</comment>
<comment type="subcellular location">
    <subcellularLocation>
        <location evidence="1">Secreted</location>
    </subcellularLocation>
</comment>
<comment type="tissue specificity">
    <text evidence="6">Expressed by the venom gland.</text>
</comment>
<comment type="domain">
    <text evidence="2">The toxin is composed of 2 domains: a highly rigid N-terminal inhibitor cystine knot (knottin) domain and a rather flexible C-terminal linear cationic cytotoxin domain that forms amphiphilic alpha-helices.</text>
</comment>
<comment type="domain">
    <text evidence="2">The presence of a 'disulfide through disulfide knot' structurally defines this protein as a knottin.</text>
</comment>
<comment type="PTM">
    <text evidence="1">Amidation at Leu-64 is not mandatory for activity on P2RX3.</text>
</comment>
<comment type="mass spectrometry"/>
<comment type="miscellaneous">
    <text evidence="1 2">Negative results: does not affect mouse P2RX2 or P2RX2/P2RX3 purinoceptors (PubMed:22842000). The toxin (and its derivatives composed of N-terminal or C-terminal domains) are inactive against a number of bacterial strains (PubMed:27412961).</text>
</comment>
<comment type="similarity">
    <text evidence="5">Belongs to the neurotoxin 19 (CSTX) family. 05 (U4-Lctx) subfamily.</text>
</comment>
<evidence type="ECO:0000269" key="1">
    <source>
    </source>
</evidence>
<evidence type="ECO:0000269" key="2">
    <source>
    </source>
</evidence>
<evidence type="ECO:0000303" key="3">
    <source>
    </source>
</evidence>
<evidence type="ECO:0000303" key="4">
    <source>
    </source>
</evidence>
<evidence type="ECO:0000305" key="5"/>
<evidence type="ECO:0000305" key="6">
    <source>
    </source>
</evidence>
<evidence type="ECO:0000312" key="7">
    <source>
        <dbReference type="PDB" id="2MZF"/>
    </source>
</evidence>
<evidence type="ECO:0000312" key="8">
    <source>
        <dbReference type="PDB" id="2MZG"/>
    </source>
</evidence>
<evidence type="ECO:0007829" key="9">
    <source>
        <dbReference type="PDB" id="2MZF"/>
    </source>
</evidence>
<evidence type="ECO:0007829" key="10">
    <source>
        <dbReference type="PDB" id="2MZG"/>
    </source>
</evidence>
<reference key="1">
    <citation type="journal article" date="2012" name="Biochim. Biophys. Acta">
        <title>Modulation of P2X3 receptors by spider toxins.</title>
        <authorList>
            <person name="Kabanova N.V."/>
            <person name="Vassilevski A.A."/>
            <person name="Rogachevskaja O.A."/>
            <person name="Bystrova M.F."/>
            <person name="Korolkova Y.V."/>
            <person name="Pluzhnikov K.A."/>
            <person name="Romanov R.A."/>
            <person name="Grishin E.V."/>
            <person name="Kolesnikov S.S."/>
        </authorList>
    </citation>
    <scope>PROTEIN SEQUENCE</scope>
    <scope>FUNCTION</scope>
    <scope>SUBCELLULAR LOCATION</scope>
    <scope>MASS SPECTROMETRY</scope>
    <scope>AMIDATION AT LEU-64</scope>
    <source>
        <tissue>Venom</tissue>
    </source>
</reference>
<reference key="2">
    <citation type="journal article" date="2016" name="Biochem. J.">
        <title>Structure of purotoxin-2 from wolf spider: modular design and membrane-assisted mode of action in arachnid toxins.</title>
        <authorList>
            <person name="Oparin P.B."/>
            <person name="Nadezhdin K.D."/>
            <person name="Berkut A.A."/>
            <person name="Arseniev A.S."/>
            <person name="Grishin E.V."/>
            <person name="Vassilevski A.A."/>
        </authorList>
    </citation>
    <scope>STRUCTURE BY NMR</scope>
    <scope>DISULFIDE BOND</scope>
    <scope>DOMAIN</scope>
</reference>
<proteinExistence type="evidence at protein level"/>